<gene>
    <name evidence="1" type="primary">panD</name>
    <name type="ordered locus">jhp_0030</name>
</gene>
<name>PAND_HELPJ</name>
<reference key="1">
    <citation type="journal article" date="1999" name="Nature">
        <title>Genomic sequence comparison of two unrelated isolates of the human gastric pathogen Helicobacter pylori.</title>
        <authorList>
            <person name="Alm R.A."/>
            <person name="Ling L.-S.L."/>
            <person name="Moir D.T."/>
            <person name="King B.L."/>
            <person name="Brown E.D."/>
            <person name="Doig P.C."/>
            <person name="Smith D.R."/>
            <person name="Noonan B."/>
            <person name="Guild B.C."/>
            <person name="deJonge B.L."/>
            <person name="Carmel G."/>
            <person name="Tummino P.J."/>
            <person name="Caruso A."/>
            <person name="Uria-Nickelsen M."/>
            <person name="Mills D.M."/>
            <person name="Ives C."/>
            <person name="Gibson R."/>
            <person name="Merberg D."/>
            <person name="Mills S.D."/>
            <person name="Jiang Q."/>
            <person name="Taylor D.E."/>
            <person name="Vovis G.F."/>
            <person name="Trust T.J."/>
        </authorList>
    </citation>
    <scope>NUCLEOTIDE SEQUENCE [LARGE SCALE GENOMIC DNA]</scope>
    <source>
        <strain>J99 / ATCC 700824</strain>
    </source>
</reference>
<evidence type="ECO:0000255" key="1">
    <source>
        <dbReference type="HAMAP-Rule" id="MF_00446"/>
    </source>
</evidence>
<accession>Q9ZN30</accession>
<sequence length="117" mass="12968">MTFEMLYSKIHRATITDANLNYIGSITIDEDLAKLAKLREGMKVEIVDVNNGERFSTYVILGKKRGKICVNGAAARKVAIGDVVIILAYASMNEDEINTHKPSIVLVDEKNEILEKG</sequence>
<protein>
    <recommendedName>
        <fullName evidence="1">Aspartate 1-decarboxylase</fullName>
        <ecNumber evidence="1">4.1.1.11</ecNumber>
    </recommendedName>
    <alternativeName>
        <fullName evidence="1">Aspartate alpha-decarboxylase</fullName>
    </alternativeName>
    <component>
        <recommendedName>
            <fullName evidence="1">Aspartate 1-decarboxylase beta chain</fullName>
        </recommendedName>
    </component>
    <component>
        <recommendedName>
            <fullName evidence="1">Aspartate 1-decarboxylase alpha chain</fullName>
        </recommendedName>
    </component>
</protein>
<proteinExistence type="inferred from homology"/>
<dbReference type="EC" id="4.1.1.11" evidence="1"/>
<dbReference type="EMBL" id="AE001439">
    <property type="protein sequence ID" value="AAD05614.1"/>
    <property type="molecule type" value="Genomic_DNA"/>
</dbReference>
<dbReference type="PIR" id="D71983">
    <property type="entry name" value="D71983"/>
</dbReference>
<dbReference type="RefSeq" id="WP_000142257.1">
    <property type="nucleotide sequence ID" value="NC_000921.1"/>
</dbReference>
<dbReference type="SMR" id="Q9ZN30"/>
<dbReference type="KEGG" id="hpj:jhp_0030"/>
<dbReference type="PATRIC" id="fig|85963.30.peg.1010"/>
<dbReference type="eggNOG" id="COG0853">
    <property type="taxonomic scope" value="Bacteria"/>
</dbReference>
<dbReference type="UniPathway" id="UPA00028">
    <property type="reaction ID" value="UER00002"/>
</dbReference>
<dbReference type="Proteomes" id="UP000000804">
    <property type="component" value="Chromosome"/>
</dbReference>
<dbReference type="GO" id="GO:0005829">
    <property type="term" value="C:cytosol"/>
    <property type="evidence" value="ECO:0007669"/>
    <property type="project" value="TreeGrafter"/>
</dbReference>
<dbReference type="GO" id="GO:0004068">
    <property type="term" value="F:aspartate 1-decarboxylase activity"/>
    <property type="evidence" value="ECO:0007669"/>
    <property type="project" value="UniProtKB-UniRule"/>
</dbReference>
<dbReference type="GO" id="GO:0006523">
    <property type="term" value="P:alanine biosynthetic process"/>
    <property type="evidence" value="ECO:0007669"/>
    <property type="project" value="InterPro"/>
</dbReference>
<dbReference type="GO" id="GO:0015940">
    <property type="term" value="P:pantothenate biosynthetic process"/>
    <property type="evidence" value="ECO:0007669"/>
    <property type="project" value="UniProtKB-UniRule"/>
</dbReference>
<dbReference type="CDD" id="cd06919">
    <property type="entry name" value="Asp_decarbox"/>
    <property type="match status" value="1"/>
</dbReference>
<dbReference type="Gene3D" id="2.40.40.20">
    <property type="match status" value="1"/>
</dbReference>
<dbReference type="HAMAP" id="MF_00446">
    <property type="entry name" value="PanD"/>
    <property type="match status" value="1"/>
</dbReference>
<dbReference type="InterPro" id="IPR009010">
    <property type="entry name" value="Asp_de-COase-like_dom_sf"/>
</dbReference>
<dbReference type="InterPro" id="IPR003190">
    <property type="entry name" value="Asp_decarbox"/>
</dbReference>
<dbReference type="NCBIfam" id="TIGR00223">
    <property type="entry name" value="panD"/>
    <property type="match status" value="1"/>
</dbReference>
<dbReference type="PANTHER" id="PTHR21012">
    <property type="entry name" value="ASPARTATE 1-DECARBOXYLASE"/>
    <property type="match status" value="1"/>
</dbReference>
<dbReference type="PANTHER" id="PTHR21012:SF0">
    <property type="entry name" value="ASPARTATE 1-DECARBOXYLASE"/>
    <property type="match status" value="1"/>
</dbReference>
<dbReference type="Pfam" id="PF02261">
    <property type="entry name" value="Asp_decarbox"/>
    <property type="match status" value="1"/>
</dbReference>
<dbReference type="PIRSF" id="PIRSF006246">
    <property type="entry name" value="Asp_decarbox"/>
    <property type="match status" value="1"/>
</dbReference>
<dbReference type="SUPFAM" id="SSF50692">
    <property type="entry name" value="ADC-like"/>
    <property type="match status" value="1"/>
</dbReference>
<organism>
    <name type="scientific">Helicobacter pylori (strain J99 / ATCC 700824)</name>
    <name type="common">Campylobacter pylori J99</name>
    <dbReference type="NCBI Taxonomy" id="85963"/>
    <lineage>
        <taxon>Bacteria</taxon>
        <taxon>Pseudomonadati</taxon>
        <taxon>Campylobacterota</taxon>
        <taxon>Epsilonproteobacteria</taxon>
        <taxon>Campylobacterales</taxon>
        <taxon>Helicobacteraceae</taxon>
        <taxon>Helicobacter</taxon>
    </lineage>
</organism>
<feature type="chain" id="PRO_0000023093" description="Aspartate 1-decarboxylase beta chain" evidence="1">
    <location>
        <begin position="1"/>
        <end position="24"/>
    </location>
</feature>
<feature type="chain" id="PRO_0000023094" description="Aspartate 1-decarboxylase alpha chain" evidence="1">
    <location>
        <begin position="25"/>
        <end position="117"/>
    </location>
</feature>
<feature type="active site" description="Schiff-base intermediate with substrate; via pyruvic acid" evidence="1">
    <location>
        <position position="25"/>
    </location>
</feature>
<feature type="active site" description="Proton donor" evidence="1">
    <location>
        <position position="58"/>
    </location>
</feature>
<feature type="binding site" evidence="1">
    <location>
        <position position="57"/>
    </location>
    <ligand>
        <name>substrate</name>
    </ligand>
</feature>
<feature type="binding site" evidence="1">
    <location>
        <begin position="72"/>
        <end position="74"/>
    </location>
    <ligand>
        <name>substrate</name>
    </ligand>
</feature>
<feature type="modified residue" description="Pyruvic acid (Ser)" evidence="1">
    <location>
        <position position="25"/>
    </location>
</feature>
<keyword id="KW-0068">Autocatalytic cleavage</keyword>
<keyword id="KW-0963">Cytoplasm</keyword>
<keyword id="KW-0210">Decarboxylase</keyword>
<keyword id="KW-0456">Lyase</keyword>
<keyword id="KW-0566">Pantothenate biosynthesis</keyword>
<keyword id="KW-0670">Pyruvate</keyword>
<keyword id="KW-0704">Schiff base</keyword>
<keyword id="KW-0865">Zymogen</keyword>
<comment type="function">
    <text evidence="1">Catalyzes the pyruvoyl-dependent decarboxylation of aspartate to produce beta-alanine.</text>
</comment>
<comment type="catalytic activity">
    <reaction evidence="1">
        <text>L-aspartate + H(+) = beta-alanine + CO2</text>
        <dbReference type="Rhea" id="RHEA:19497"/>
        <dbReference type="ChEBI" id="CHEBI:15378"/>
        <dbReference type="ChEBI" id="CHEBI:16526"/>
        <dbReference type="ChEBI" id="CHEBI:29991"/>
        <dbReference type="ChEBI" id="CHEBI:57966"/>
        <dbReference type="EC" id="4.1.1.11"/>
    </reaction>
</comment>
<comment type="cofactor">
    <cofactor evidence="1">
        <name>pyruvate</name>
        <dbReference type="ChEBI" id="CHEBI:15361"/>
    </cofactor>
    <text evidence="1">Binds 1 pyruvoyl group covalently per subunit.</text>
</comment>
<comment type="pathway">
    <text evidence="1">Cofactor biosynthesis; (R)-pantothenate biosynthesis; beta-alanine from L-aspartate: step 1/1.</text>
</comment>
<comment type="subunit">
    <text evidence="1">Heterooctamer of four alpha and four beta subunits.</text>
</comment>
<comment type="subcellular location">
    <subcellularLocation>
        <location evidence="1">Cytoplasm</location>
    </subcellularLocation>
</comment>
<comment type="PTM">
    <text evidence="1">Is synthesized initially as an inactive proenzyme, which is activated by self-cleavage at a specific serine bond to produce a beta-subunit with a hydroxyl group at its C-terminus and an alpha-subunit with a pyruvoyl group at its N-terminus.</text>
</comment>
<comment type="similarity">
    <text evidence="1">Belongs to the PanD family.</text>
</comment>